<name>PYRDB_STRR6</name>
<gene>
    <name type="primary">pyrDB</name>
    <name type="synonym">pyrD</name>
    <name type="ordered locus">spr0866</name>
</gene>
<protein>
    <recommendedName>
        <fullName>Dihydroorotate dehydrogenase B (NAD(+)), catalytic subunit</fullName>
        <shortName>DHOD B</shortName>
        <shortName>DHODase B</shortName>
        <shortName>DHOdehase B</shortName>
        <ecNumber>1.3.1.14</ecNumber>
    </recommendedName>
    <alternativeName>
        <fullName>Dihydroorotate oxidase B</fullName>
    </alternativeName>
    <alternativeName>
        <fullName>Orotate reductase (NADH)</fullName>
    </alternativeName>
</protein>
<dbReference type="EC" id="1.3.1.14"/>
<dbReference type="EMBL" id="AE007317">
    <property type="protein sequence ID" value="AAK99670.1"/>
    <property type="status" value="ALT_INIT"/>
    <property type="molecule type" value="Genomic_DNA"/>
</dbReference>
<dbReference type="PIR" id="B97980">
    <property type="entry name" value="B97980"/>
</dbReference>
<dbReference type="RefSeq" id="NP_358460.2">
    <property type="nucleotide sequence ID" value="NC_003098.1"/>
</dbReference>
<dbReference type="SMR" id="Q8DQ37"/>
<dbReference type="STRING" id="171101.spr0866"/>
<dbReference type="KEGG" id="spr:spr0866"/>
<dbReference type="PATRIC" id="fig|171101.6.peg.954"/>
<dbReference type="eggNOG" id="COG0167">
    <property type="taxonomic scope" value="Bacteria"/>
</dbReference>
<dbReference type="HOGENOM" id="CLU_042042_0_0_9"/>
<dbReference type="UniPathway" id="UPA00070">
    <property type="reaction ID" value="UER00945"/>
</dbReference>
<dbReference type="Proteomes" id="UP000000586">
    <property type="component" value="Chromosome"/>
</dbReference>
<dbReference type="GO" id="GO:0005737">
    <property type="term" value="C:cytoplasm"/>
    <property type="evidence" value="ECO:0000318"/>
    <property type="project" value="GO_Central"/>
</dbReference>
<dbReference type="GO" id="GO:0004589">
    <property type="term" value="F:dihydroorotate dehydrogenase (NAD+) activity"/>
    <property type="evidence" value="ECO:0007669"/>
    <property type="project" value="UniProtKB-EC"/>
</dbReference>
<dbReference type="GO" id="GO:0004152">
    <property type="term" value="F:dihydroorotate dehydrogenase activity"/>
    <property type="evidence" value="ECO:0000318"/>
    <property type="project" value="GO_Central"/>
</dbReference>
<dbReference type="GO" id="GO:0006207">
    <property type="term" value="P:'de novo' pyrimidine nucleobase biosynthetic process"/>
    <property type="evidence" value="ECO:0000318"/>
    <property type="project" value="GO_Central"/>
</dbReference>
<dbReference type="GO" id="GO:0044205">
    <property type="term" value="P:'de novo' UMP biosynthetic process"/>
    <property type="evidence" value="ECO:0007669"/>
    <property type="project" value="UniProtKB-UniRule"/>
</dbReference>
<dbReference type="CDD" id="cd04740">
    <property type="entry name" value="DHOD_1B_like"/>
    <property type="match status" value="1"/>
</dbReference>
<dbReference type="FunFam" id="3.20.20.70:FF:000069">
    <property type="entry name" value="Dihydroorotate dehydrogenase"/>
    <property type="match status" value="1"/>
</dbReference>
<dbReference type="Gene3D" id="3.20.20.70">
    <property type="entry name" value="Aldolase class I"/>
    <property type="match status" value="1"/>
</dbReference>
<dbReference type="HAMAP" id="MF_00224">
    <property type="entry name" value="DHO_dh_type1"/>
    <property type="match status" value="1"/>
</dbReference>
<dbReference type="InterPro" id="IPR013785">
    <property type="entry name" value="Aldolase_TIM"/>
</dbReference>
<dbReference type="InterPro" id="IPR050074">
    <property type="entry name" value="DHO_dehydrogenase"/>
</dbReference>
<dbReference type="InterPro" id="IPR033888">
    <property type="entry name" value="DHOD_1B"/>
</dbReference>
<dbReference type="InterPro" id="IPR024920">
    <property type="entry name" value="Dihydroorotate_DH_1"/>
</dbReference>
<dbReference type="InterPro" id="IPR012135">
    <property type="entry name" value="Dihydroorotate_DH_1_2"/>
</dbReference>
<dbReference type="InterPro" id="IPR005720">
    <property type="entry name" value="Dihydroorotate_DH_cat"/>
</dbReference>
<dbReference type="InterPro" id="IPR001295">
    <property type="entry name" value="Dihydroorotate_DH_CS"/>
</dbReference>
<dbReference type="InterPro" id="IPR049622">
    <property type="entry name" value="Dihydroorotate_DH_I"/>
</dbReference>
<dbReference type="NCBIfam" id="NF005574">
    <property type="entry name" value="PRK07259.1"/>
    <property type="match status" value="1"/>
</dbReference>
<dbReference type="NCBIfam" id="TIGR01037">
    <property type="entry name" value="pyrD_sub1_fam"/>
    <property type="match status" value="1"/>
</dbReference>
<dbReference type="PANTHER" id="PTHR48109:SF1">
    <property type="entry name" value="DIHYDROOROTATE DEHYDROGENASE (FUMARATE)"/>
    <property type="match status" value="1"/>
</dbReference>
<dbReference type="PANTHER" id="PTHR48109">
    <property type="entry name" value="DIHYDROOROTATE DEHYDROGENASE (QUINONE), MITOCHONDRIAL-RELATED"/>
    <property type="match status" value="1"/>
</dbReference>
<dbReference type="Pfam" id="PF01180">
    <property type="entry name" value="DHO_dh"/>
    <property type="match status" value="1"/>
</dbReference>
<dbReference type="PIRSF" id="PIRSF000164">
    <property type="entry name" value="DHO_oxidase"/>
    <property type="match status" value="1"/>
</dbReference>
<dbReference type="SUPFAM" id="SSF51395">
    <property type="entry name" value="FMN-linked oxidoreductases"/>
    <property type="match status" value="1"/>
</dbReference>
<dbReference type="PROSITE" id="PS00911">
    <property type="entry name" value="DHODEHASE_1"/>
    <property type="match status" value="1"/>
</dbReference>
<dbReference type="PROSITE" id="PS00912">
    <property type="entry name" value="DHODEHASE_2"/>
    <property type="match status" value="1"/>
</dbReference>
<comment type="function">
    <text evidence="1">Catalyzes the conversion of dihydroorotate to orotate with NAD(+) as electron acceptor.</text>
</comment>
<comment type="catalytic activity">
    <reaction>
        <text>(S)-dihydroorotate + NAD(+) = orotate + NADH + H(+)</text>
        <dbReference type="Rhea" id="RHEA:13513"/>
        <dbReference type="ChEBI" id="CHEBI:15378"/>
        <dbReference type="ChEBI" id="CHEBI:30839"/>
        <dbReference type="ChEBI" id="CHEBI:30864"/>
        <dbReference type="ChEBI" id="CHEBI:57540"/>
        <dbReference type="ChEBI" id="CHEBI:57945"/>
        <dbReference type="EC" id="1.3.1.14"/>
    </reaction>
</comment>
<comment type="cofactor">
    <cofactor evidence="1">
        <name>FMN</name>
        <dbReference type="ChEBI" id="CHEBI:58210"/>
    </cofactor>
    <text evidence="1">Binds 1 FMN per subunit.</text>
</comment>
<comment type="pathway">
    <text>Pyrimidine metabolism; UMP biosynthesis via de novo pathway; orotate from (S)-dihydroorotate (NAD(+) route): step 1/1.</text>
</comment>
<comment type="subunit">
    <text evidence="1">Heterotetramer of 2 PyrK and 2 PyrD type B subunits.</text>
</comment>
<comment type="subcellular location">
    <subcellularLocation>
        <location evidence="1">Cytoplasm</location>
    </subcellularLocation>
</comment>
<comment type="similarity">
    <text evidence="2">Belongs to the dihydroorotate dehydrogenase family. Type 1 subfamily.</text>
</comment>
<comment type="sequence caution" evidence="2">
    <conflict type="erroneous initiation">
        <sequence resource="EMBL-CDS" id="AAK99670"/>
    </conflict>
    <text>Extended N-terminus.</text>
</comment>
<accession>Q8DQ37</accession>
<keyword id="KW-0963">Cytoplasm</keyword>
<keyword id="KW-0285">Flavoprotein</keyword>
<keyword id="KW-0288">FMN</keyword>
<keyword id="KW-0520">NAD</keyword>
<keyword id="KW-0560">Oxidoreductase</keyword>
<keyword id="KW-0665">Pyrimidine biosynthesis</keyword>
<keyword id="KW-1185">Reference proteome</keyword>
<reference key="1">
    <citation type="journal article" date="2001" name="J. Bacteriol.">
        <title>Genome of the bacterium Streptococcus pneumoniae strain R6.</title>
        <authorList>
            <person name="Hoskins J."/>
            <person name="Alborn W.E. Jr."/>
            <person name="Arnold J."/>
            <person name="Blaszczak L.C."/>
            <person name="Burgett S."/>
            <person name="DeHoff B.S."/>
            <person name="Estrem S.T."/>
            <person name="Fritz L."/>
            <person name="Fu D.-J."/>
            <person name="Fuller W."/>
            <person name="Geringer C."/>
            <person name="Gilmour R."/>
            <person name="Glass J.S."/>
            <person name="Khoja H."/>
            <person name="Kraft A.R."/>
            <person name="Lagace R.E."/>
            <person name="LeBlanc D.J."/>
            <person name="Lee L.N."/>
            <person name="Lefkowitz E.J."/>
            <person name="Lu J."/>
            <person name="Matsushima P."/>
            <person name="McAhren S.M."/>
            <person name="McHenney M."/>
            <person name="McLeaster K."/>
            <person name="Mundy C.W."/>
            <person name="Nicas T.I."/>
            <person name="Norris F.H."/>
            <person name="O'Gara M."/>
            <person name="Peery R.B."/>
            <person name="Robertson G.T."/>
            <person name="Rockey P."/>
            <person name="Sun P.-M."/>
            <person name="Winkler M.E."/>
            <person name="Yang Y."/>
            <person name="Young-Bellido M."/>
            <person name="Zhao G."/>
            <person name="Zook C.A."/>
            <person name="Baltz R.H."/>
            <person name="Jaskunas S.R."/>
            <person name="Rosteck P.R. Jr."/>
            <person name="Skatrud P.L."/>
            <person name="Glass J.I."/>
        </authorList>
    </citation>
    <scope>NUCLEOTIDE SEQUENCE [LARGE SCALE GENOMIC DNA]</scope>
    <source>
        <strain>ATCC BAA-255 / R6</strain>
    </source>
</reference>
<feature type="chain" id="PRO_0000409556" description="Dihydroorotate dehydrogenase B (NAD(+)), catalytic subunit">
    <location>
        <begin position="1"/>
        <end position="312"/>
    </location>
</feature>
<feature type="active site" description="Nucleophile">
    <location>
        <position position="134"/>
    </location>
</feature>
<feature type="binding site" evidence="1">
    <location>
        <position position="23"/>
    </location>
    <ligand>
        <name>FMN</name>
        <dbReference type="ChEBI" id="CHEBI:58210"/>
    </ligand>
</feature>
<feature type="binding site" evidence="1">
    <location>
        <begin position="47"/>
        <end position="48"/>
    </location>
    <ligand>
        <name>FMN</name>
        <dbReference type="ChEBI" id="CHEBI:58210"/>
    </ligand>
</feature>
<feature type="binding site" evidence="1">
    <location>
        <position position="47"/>
    </location>
    <ligand>
        <name>substrate</name>
    </ligand>
</feature>
<feature type="binding site" evidence="1">
    <location>
        <begin position="71"/>
        <end position="75"/>
    </location>
    <ligand>
        <name>substrate</name>
    </ligand>
</feature>
<feature type="binding site" evidence="1">
    <location>
        <position position="103"/>
    </location>
    <ligand>
        <name>FMN</name>
        <dbReference type="ChEBI" id="CHEBI:58210"/>
    </ligand>
</feature>
<feature type="binding site" evidence="1">
    <location>
        <position position="131"/>
    </location>
    <ligand>
        <name>FMN</name>
        <dbReference type="ChEBI" id="CHEBI:58210"/>
    </ligand>
</feature>
<feature type="binding site" evidence="1">
    <location>
        <position position="131"/>
    </location>
    <ligand>
        <name>substrate</name>
    </ligand>
</feature>
<feature type="binding site" evidence="1">
    <location>
        <position position="171"/>
    </location>
    <ligand>
        <name>FMN</name>
        <dbReference type="ChEBI" id="CHEBI:58210"/>
    </ligand>
</feature>
<feature type="binding site" evidence="1">
    <location>
        <position position="197"/>
    </location>
    <ligand>
        <name>FMN</name>
        <dbReference type="ChEBI" id="CHEBI:58210"/>
    </ligand>
</feature>
<feature type="binding site" evidence="1">
    <location>
        <begin position="198"/>
        <end position="199"/>
    </location>
    <ligand>
        <name>substrate</name>
    </ligand>
</feature>
<feature type="binding site" evidence="1">
    <location>
        <position position="223"/>
    </location>
    <ligand>
        <name>FMN</name>
        <dbReference type="ChEBI" id="CHEBI:58210"/>
    </ligand>
</feature>
<feature type="binding site" evidence="1">
    <location>
        <begin position="249"/>
        <end position="250"/>
    </location>
    <ligand>
        <name>FMN</name>
        <dbReference type="ChEBI" id="CHEBI:58210"/>
    </ligand>
</feature>
<feature type="binding site" evidence="1">
    <location>
        <begin position="271"/>
        <end position="272"/>
    </location>
    <ligand>
        <name>FMN</name>
        <dbReference type="ChEBI" id="CHEBI:58210"/>
    </ligand>
</feature>
<organism>
    <name type="scientific">Streptococcus pneumoniae (strain ATCC BAA-255 / R6)</name>
    <dbReference type="NCBI Taxonomy" id="171101"/>
    <lineage>
        <taxon>Bacteria</taxon>
        <taxon>Bacillati</taxon>
        <taxon>Bacillota</taxon>
        <taxon>Bacilli</taxon>
        <taxon>Lactobacillales</taxon>
        <taxon>Streptococcaceae</taxon>
        <taxon>Streptococcus</taxon>
    </lineage>
</organism>
<sequence length="312" mass="33167">MTTNRLQVSLPGLDLKNPIIPASGCFGFGQEYAKYYDLNLLGSIMIKATTLEPRFGNPTPRVAETPAGMLNAIGLQNPGLEVVLAEKLPWLEREYPNLPIIANVAGFSKQEYAAVSHGISKATNVKAIELNISCPNVDHCNHGLLIGQDPDLAYDVVKAAVEASEVPVYVKLTPSVTDIVTVAKAAEDAGASGLTMINTLVGMRFDLKTRKPILANGTGGMSGPAVFPVALKLIRQVAQTTDLPIIGMGGVDSTEAALEMYLAGASAIGVGTANFTNPYACPDIIENLPKVMDKYGISSLEELRQEVKESLR</sequence>
<proteinExistence type="inferred from homology"/>
<evidence type="ECO:0000250" key="1"/>
<evidence type="ECO:0000305" key="2"/>